<keyword id="KW-0963">Cytoplasm</keyword>
<keyword id="KW-0448">Lipopolysaccharide biosynthesis</keyword>
<keyword id="KW-0548">Nucleotidyltransferase</keyword>
<keyword id="KW-0808">Transferase</keyword>
<evidence type="ECO:0000255" key="1">
    <source>
        <dbReference type="HAMAP-Rule" id="MF_00057"/>
    </source>
</evidence>
<protein>
    <recommendedName>
        <fullName evidence="1">3-deoxy-manno-octulosonate cytidylyltransferase</fullName>
        <ecNumber evidence="1">2.7.7.38</ecNumber>
    </recommendedName>
    <alternativeName>
        <fullName evidence="1">CMP-2-keto-3-deoxyoctulosonic acid synthase</fullName>
        <shortName evidence="1">CKS</shortName>
        <shortName evidence="1">CMP-KDO synthase</shortName>
    </alternativeName>
</protein>
<proteinExistence type="inferred from homology"/>
<organism>
    <name type="scientific">Haemophilus influenzae (strain PittGG)</name>
    <dbReference type="NCBI Taxonomy" id="374931"/>
    <lineage>
        <taxon>Bacteria</taxon>
        <taxon>Pseudomonadati</taxon>
        <taxon>Pseudomonadota</taxon>
        <taxon>Gammaproteobacteria</taxon>
        <taxon>Pasteurellales</taxon>
        <taxon>Pasteurellaceae</taxon>
        <taxon>Haemophilus</taxon>
    </lineage>
</organism>
<comment type="function">
    <text evidence="1">Activates KDO (a required 8-carbon sugar) for incorporation into bacterial lipopolysaccharide in Gram-negative bacteria.</text>
</comment>
<comment type="catalytic activity">
    <reaction evidence="1">
        <text>3-deoxy-alpha-D-manno-oct-2-ulosonate + CTP = CMP-3-deoxy-beta-D-manno-octulosonate + diphosphate</text>
        <dbReference type="Rhea" id="RHEA:23448"/>
        <dbReference type="ChEBI" id="CHEBI:33019"/>
        <dbReference type="ChEBI" id="CHEBI:37563"/>
        <dbReference type="ChEBI" id="CHEBI:85986"/>
        <dbReference type="ChEBI" id="CHEBI:85987"/>
        <dbReference type="EC" id="2.7.7.38"/>
    </reaction>
</comment>
<comment type="pathway">
    <text evidence="1">Nucleotide-sugar biosynthesis; CMP-3-deoxy-D-manno-octulosonate biosynthesis; CMP-3-deoxy-D-manno-octulosonate from 3-deoxy-D-manno-octulosonate and CTP: step 1/1.</text>
</comment>
<comment type="pathway">
    <text evidence="1">Bacterial outer membrane biogenesis; lipopolysaccharide biosynthesis.</text>
</comment>
<comment type="subcellular location">
    <subcellularLocation>
        <location evidence="1">Cytoplasm</location>
    </subcellularLocation>
</comment>
<comment type="similarity">
    <text evidence="1">Belongs to the KdsB family.</text>
</comment>
<name>KDSB_HAEIG</name>
<sequence length="254" mass="28399">MSFTVIIPARFASSRLPGKPLADIAGKPMIQHVFEKALQSGANRVIIATDNENVADVVKNFGAEVCMTSVNHNSGTERLAEVVEKLAIPDNEIIVNIQGDEPLIPPVIVRQVADNLAKFNVNMASLAVKIHDGEELFNPNAVKVLTDKDGYVLYFSRSVIPYDRDQFMNLQDVQKVQLADAYLRHIGIYAYRSGFIKQYMQWAPTQLENLEKLEQLRVLYNGERIHVELAKEVPAVGVDTAEDLEKVRLILAKD</sequence>
<accession>A5UFM6</accession>
<reference key="1">
    <citation type="journal article" date="2007" name="Genome Biol.">
        <title>Characterization and modeling of the Haemophilus influenzae core and supragenomes based on the complete genomic sequences of Rd and 12 clinical nontypeable strains.</title>
        <authorList>
            <person name="Hogg J.S."/>
            <person name="Hu F.Z."/>
            <person name="Janto B."/>
            <person name="Boissy R."/>
            <person name="Hayes J."/>
            <person name="Keefe R."/>
            <person name="Post J.C."/>
            <person name="Ehrlich G.D."/>
        </authorList>
    </citation>
    <scope>NUCLEOTIDE SEQUENCE [LARGE SCALE GENOMIC DNA]</scope>
    <source>
        <strain>PittGG</strain>
    </source>
</reference>
<gene>
    <name evidence="1" type="primary">kdsB</name>
    <name type="ordered locus">CGSHiGG_02800</name>
</gene>
<feature type="chain" id="PRO_1000003362" description="3-deoxy-manno-octulosonate cytidylyltransferase">
    <location>
        <begin position="1"/>
        <end position="254"/>
    </location>
</feature>
<dbReference type="EC" id="2.7.7.38" evidence="1"/>
<dbReference type="EMBL" id="CP000672">
    <property type="protein sequence ID" value="ABQ99581.1"/>
    <property type="molecule type" value="Genomic_DNA"/>
</dbReference>
<dbReference type="SMR" id="A5UFM6"/>
<dbReference type="KEGG" id="hiq:CGSHiGG_02800"/>
<dbReference type="HOGENOM" id="CLU_065038_1_0_6"/>
<dbReference type="UniPathway" id="UPA00030"/>
<dbReference type="UniPathway" id="UPA00358">
    <property type="reaction ID" value="UER00476"/>
</dbReference>
<dbReference type="Proteomes" id="UP000001990">
    <property type="component" value="Chromosome"/>
</dbReference>
<dbReference type="GO" id="GO:0005829">
    <property type="term" value="C:cytosol"/>
    <property type="evidence" value="ECO:0007669"/>
    <property type="project" value="TreeGrafter"/>
</dbReference>
<dbReference type="GO" id="GO:0008690">
    <property type="term" value="F:3-deoxy-manno-octulosonate cytidylyltransferase activity"/>
    <property type="evidence" value="ECO:0007669"/>
    <property type="project" value="UniProtKB-UniRule"/>
</dbReference>
<dbReference type="GO" id="GO:0033468">
    <property type="term" value="P:CMP-keto-3-deoxy-D-manno-octulosonic acid biosynthetic process"/>
    <property type="evidence" value="ECO:0007669"/>
    <property type="project" value="UniProtKB-UniRule"/>
</dbReference>
<dbReference type="GO" id="GO:0009103">
    <property type="term" value="P:lipopolysaccharide biosynthetic process"/>
    <property type="evidence" value="ECO:0007669"/>
    <property type="project" value="UniProtKB-UniRule"/>
</dbReference>
<dbReference type="CDD" id="cd02517">
    <property type="entry name" value="CMP-KDO-Synthetase"/>
    <property type="match status" value="1"/>
</dbReference>
<dbReference type="FunFam" id="3.90.550.10:FF:000011">
    <property type="entry name" value="3-deoxy-manno-octulosonate cytidylyltransferase"/>
    <property type="match status" value="1"/>
</dbReference>
<dbReference type="Gene3D" id="3.90.550.10">
    <property type="entry name" value="Spore Coat Polysaccharide Biosynthesis Protein SpsA, Chain A"/>
    <property type="match status" value="1"/>
</dbReference>
<dbReference type="HAMAP" id="MF_00057">
    <property type="entry name" value="KdsB"/>
    <property type="match status" value="1"/>
</dbReference>
<dbReference type="InterPro" id="IPR003329">
    <property type="entry name" value="Cytidylyl_trans"/>
</dbReference>
<dbReference type="InterPro" id="IPR004528">
    <property type="entry name" value="KdsB"/>
</dbReference>
<dbReference type="InterPro" id="IPR029044">
    <property type="entry name" value="Nucleotide-diphossugar_trans"/>
</dbReference>
<dbReference type="NCBIfam" id="TIGR00466">
    <property type="entry name" value="kdsB"/>
    <property type="match status" value="1"/>
</dbReference>
<dbReference type="NCBIfam" id="NF003950">
    <property type="entry name" value="PRK05450.1-3"/>
    <property type="match status" value="1"/>
</dbReference>
<dbReference type="NCBIfam" id="NF003952">
    <property type="entry name" value="PRK05450.1-5"/>
    <property type="match status" value="1"/>
</dbReference>
<dbReference type="NCBIfam" id="NF009905">
    <property type="entry name" value="PRK13368.1"/>
    <property type="match status" value="1"/>
</dbReference>
<dbReference type="PANTHER" id="PTHR42866">
    <property type="entry name" value="3-DEOXY-MANNO-OCTULOSONATE CYTIDYLYLTRANSFERASE"/>
    <property type="match status" value="1"/>
</dbReference>
<dbReference type="PANTHER" id="PTHR42866:SF2">
    <property type="entry name" value="3-DEOXY-MANNO-OCTULOSONATE CYTIDYLYLTRANSFERASE, MITOCHONDRIAL"/>
    <property type="match status" value="1"/>
</dbReference>
<dbReference type="Pfam" id="PF02348">
    <property type="entry name" value="CTP_transf_3"/>
    <property type="match status" value="1"/>
</dbReference>
<dbReference type="SUPFAM" id="SSF53448">
    <property type="entry name" value="Nucleotide-diphospho-sugar transferases"/>
    <property type="match status" value="1"/>
</dbReference>